<proteinExistence type="inferred from homology"/>
<sequence>MLKKFFKEISYKKSYVLAFSGGLDSTVLLHMISLYIKKIKNNNNFFKKIFKFRAVYINHNICKESKYWSNHCHDQCLKYKVFFKSINIFISDFSEGIESSARRERYKALFSDLNPEEVLITAHHQDDQIETILLSLKRGSGPRGISGMQSIKKFDSHIIKRPLLHCKKEDIKLYAIKHNLNWIDDKSNLNIKFDRNFLRSEIIPLLKKRWPNIGNTISRSAKLCFDQEKLLNELLKDTLNSLVEKDKSLKFIELFKMSEIKRFAILRKWFCLNNFKMPSLSQLKHIWKNVIISKKDSKAEIKINNNIIKRFKKNLYFIPIYSKNHLKNIIFKTSLNHSKKIVLPYDLGTLITKPIMINENFIKKINFFYYNNKKKFIFLINLNYMKKMSFTVKLWILFIC</sequence>
<gene>
    <name evidence="1" type="primary">tilS</name>
    <name type="ordered locus">WIGBR3990</name>
</gene>
<accession>Q8D2F5</accession>
<keyword id="KW-0067">ATP-binding</keyword>
<keyword id="KW-0963">Cytoplasm</keyword>
<keyword id="KW-0436">Ligase</keyword>
<keyword id="KW-0547">Nucleotide-binding</keyword>
<keyword id="KW-1185">Reference proteome</keyword>
<keyword id="KW-0819">tRNA processing</keyword>
<comment type="function">
    <text evidence="1">Ligates lysine onto the cytidine present at position 34 of the AUA codon-specific tRNA(Ile) that contains the anticodon CAU, in an ATP-dependent manner. Cytidine is converted to lysidine, thus changing the amino acid specificity of the tRNA from methionine to isoleucine.</text>
</comment>
<comment type="catalytic activity">
    <reaction evidence="1">
        <text>cytidine(34) in tRNA(Ile2) + L-lysine + ATP = lysidine(34) in tRNA(Ile2) + AMP + diphosphate + H(+)</text>
        <dbReference type="Rhea" id="RHEA:43744"/>
        <dbReference type="Rhea" id="RHEA-COMP:10625"/>
        <dbReference type="Rhea" id="RHEA-COMP:10670"/>
        <dbReference type="ChEBI" id="CHEBI:15378"/>
        <dbReference type="ChEBI" id="CHEBI:30616"/>
        <dbReference type="ChEBI" id="CHEBI:32551"/>
        <dbReference type="ChEBI" id="CHEBI:33019"/>
        <dbReference type="ChEBI" id="CHEBI:82748"/>
        <dbReference type="ChEBI" id="CHEBI:83665"/>
        <dbReference type="ChEBI" id="CHEBI:456215"/>
        <dbReference type="EC" id="6.3.4.19"/>
    </reaction>
</comment>
<comment type="subcellular location">
    <subcellularLocation>
        <location evidence="1">Cytoplasm</location>
    </subcellularLocation>
</comment>
<comment type="domain">
    <text>The N-terminal region contains the highly conserved SGGXDS motif, predicted to be a P-loop motif involved in ATP binding.</text>
</comment>
<comment type="similarity">
    <text evidence="1">Belongs to the tRNA(Ile)-lysidine synthase family.</text>
</comment>
<organism>
    <name type="scientific">Wigglesworthia glossinidia brevipalpis</name>
    <dbReference type="NCBI Taxonomy" id="36870"/>
    <lineage>
        <taxon>Bacteria</taxon>
        <taxon>Pseudomonadati</taxon>
        <taxon>Pseudomonadota</taxon>
        <taxon>Gammaproteobacteria</taxon>
        <taxon>Enterobacterales</taxon>
        <taxon>Erwiniaceae</taxon>
        <taxon>Wigglesworthia</taxon>
    </lineage>
</organism>
<protein>
    <recommendedName>
        <fullName evidence="1">tRNA(Ile)-lysidine synthase</fullName>
        <ecNumber evidence="1">6.3.4.19</ecNumber>
    </recommendedName>
    <alternativeName>
        <fullName evidence="1">tRNA(Ile)-2-lysyl-cytidine synthase</fullName>
    </alternativeName>
    <alternativeName>
        <fullName evidence="1">tRNA(Ile)-lysidine synthetase</fullName>
    </alternativeName>
</protein>
<feature type="chain" id="PRO_0000181804" description="tRNA(Ile)-lysidine synthase">
    <location>
        <begin position="1"/>
        <end position="400"/>
    </location>
</feature>
<feature type="binding site" evidence="1">
    <location>
        <begin position="20"/>
        <end position="25"/>
    </location>
    <ligand>
        <name>ATP</name>
        <dbReference type="ChEBI" id="CHEBI:30616"/>
    </ligand>
</feature>
<name>TILS_WIGBR</name>
<evidence type="ECO:0000255" key="1">
    <source>
        <dbReference type="HAMAP-Rule" id="MF_01161"/>
    </source>
</evidence>
<dbReference type="EC" id="6.3.4.19" evidence="1"/>
<dbReference type="EMBL" id="BA000021">
    <property type="protein sequence ID" value="BAC24545.1"/>
    <property type="molecule type" value="Genomic_DNA"/>
</dbReference>
<dbReference type="SMR" id="Q8D2F5"/>
<dbReference type="STRING" id="36870.gene:10368900"/>
<dbReference type="KEGG" id="wbr:mesJ"/>
<dbReference type="eggNOG" id="COG0037">
    <property type="taxonomic scope" value="Bacteria"/>
</dbReference>
<dbReference type="HOGENOM" id="CLU_018869_2_0_6"/>
<dbReference type="OrthoDB" id="9807403at2"/>
<dbReference type="Proteomes" id="UP000000562">
    <property type="component" value="Chromosome"/>
</dbReference>
<dbReference type="GO" id="GO:0005737">
    <property type="term" value="C:cytoplasm"/>
    <property type="evidence" value="ECO:0007669"/>
    <property type="project" value="UniProtKB-SubCell"/>
</dbReference>
<dbReference type="GO" id="GO:0005524">
    <property type="term" value="F:ATP binding"/>
    <property type="evidence" value="ECO:0007669"/>
    <property type="project" value="UniProtKB-UniRule"/>
</dbReference>
<dbReference type="GO" id="GO:0032267">
    <property type="term" value="F:tRNA(Ile)-lysidine synthase activity"/>
    <property type="evidence" value="ECO:0007669"/>
    <property type="project" value="UniProtKB-EC"/>
</dbReference>
<dbReference type="GO" id="GO:0006400">
    <property type="term" value="P:tRNA modification"/>
    <property type="evidence" value="ECO:0007669"/>
    <property type="project" value="UniProtKB-UniRule"/>
</dbReference>
<dbReference type="CDD" id="cd01992">
    <property type="entry name" value="TilS_N"/>
    <property type="match status" value="1"/>
</dbReference>
<dbReference type="Gene3D" id="1.20.59.20">
    <property type="match status" value="1"/>
</dbReference>
<dbReference type="Gene3D" id="3.40.50.620">
    <property type="entry name" value="HUPs"/>
    <property type="match status" value="1"/>
</dbReference>
<dbReference type="HAMAP" id="MF_01161">
    <property type="entry name" value="tRNA_Ile_lys_synt"/>
    <property type="match status" value="1"/>
</dbReference>
<dbReference type="InterPro" id="IPR014729">
    <property type="entry name" value="Rossmann-like_a/b/a_fold"/>
</dbReference>
<dbReference type="InterPro" id="IPR011063">
    <property type="entry name" value="TilS/TtcA_N"/>
</dbReference>
<dbReference type="InterPro" id="IPR012094">
    <property type="entry name" value="tRNA_Ile_lys_synt"/>
</dbReference>
<dbReference type="InterPro" id="IPR012795">
    <property type="entry name" value="tRNA_Ile_lys_synt_N"/>
</dbReference>
<dbReference type="InterPro" id="IPR015262">
    <property type="entry name" value="tRNA_Ile_lys_synt_subst-bd"/>
</dbReference>
<dbReference type="NCBIfam" id="TIGR02432">
    <property type="entry name" value="lysidine_TilS_N"/>
    <property type="match status" value="1"/>
</dbReference>
<dbReference type="PANTHER" id="PTHR43033">
    <property type="entry name" value="TRNA(ILE)-LYSIDINE SYNTHASE-RELATED"/>
    <property type="match status" value="1"/>
</dbReference>
<dbReference type="PANTHER" id="PTHR43033:SF1">
    <property type="entry name" value="TRNA(ILE)-LYSIDINE SYNTHASE-RELATED"/>
    <property type="match status" value="1"/>
</dbReference>
<dbReference type="Pfam" id="PF01171">
    <property type="entry name" value="ATP_bind_3"/>
    <property type="match status" value="1"/>
</dbReference>
<dbReference type="Pfam" id="PF09179">
    <property type="entry name" value="TilS"/>
    <property type="match status" value="1"/>
</dbReference>
<dbReference type="SUPFAM" id="SSF52402">
    <property type="entry name" value="Adenine nucleotide alpha hydrolases-like"/>
    <property type="match status" value="1"/>
</dbReference>
<dbReference type="SUPFAM" id="SSF82829">
    <property type="entry name" value="MesJ substrate recognition domain-like"/>
    <property type="match status" value="1"/>
</dbReference>
<reference key="1">
    <citation type="journal article" date="2002" name="Nat. Genet.">
        <title>Genome sequence of the endocellular obligate symbiont of tsetse flies, Wigglesworthia glossinidia.</title>
        <authorList>
            <person name="Akman L."/>
            <person name="Yamashita A."/>
            <person name="Watanabe H."/>
            <person name="Oshima K."/>
            <person name="Shiba T."/>
            <person name="Hattori M."/>
            <person name="Aksoy S."/>
        </authorList>
    </citation>
    <scope>NUCLEOTIDE SEQUENCE [LARGE SCALE GENOMIC DNA]</scope>
</reference>